<gene>
    <name type="primary">EEF1A1</name>
    <name type="synonym">EEF1A</name>
    <name type="synonym">EF1A</name>
</gene>
<feature type="initiator methionine" description="Removed" evidence="3">
    <location>
        <position position="1"/>
    </location>
</feature>
<feature type="chain" id="PRO_0000090882" description="Elongation factor 1-alpha 1">
    <location>
        <begin position="2"/>
        <end position="462"/>
    </location>
</feature>
<feature type="domain" description="tr-type G">
    <location>
        <begin position="5"/>
        <end position="242"/>
    </location>
</feature>
<feature type="region of interest" description="G1" evidence="5">
    <location>
        <begin position="14"/>
        <end position="21"/>
    </location>
</feature>
<feature type="region of interest" description="G2" evidence="5">
    <location>
        <begin position="70"/>
        <end position="74"/>
    </location>
</feature>
<feature type="region of interest" description="G3" evidence="5">
    <location>
        <begin position="91"/>
        <end position="94"/>
    </location>
</feature>
<feature type="region of interest" description="G4" evidence="5">
    <location>
        <begin position="153"/>
        <end position="156"/>
    </location>
</feature>
<feature type="region of interest" description="G5" evidence="5">
    <location>
        <begin position="194"/>
        <end position="196"/>
    </location>
</feature>
<feature type="binding site" evidence="4">
    <location>
        <begin position="14"/>
        <end position="21"/>
    </location>
    <ligand>
        <name>GTP</name>
        <dbReference type="ChEBI" id="CHEBI:37565"/>
    </ligand>
</feature>
<feature type="binding site" evidence="4">
    <location>
        <begin position="153"/>
        <end position="156"/>
    </location>
    <ligand>
        <name>GTP</name>
        <dbReference type="ChEBI" id="CHEBI:37565"/>
    </ligand>
</feature>
<feature type="binding site" evidence="4">
    <location>
        <begin position="194"/>
        <end position="196"/>
    </location>
    <ligand>
        <name>GTP</name>
        <dbReference type="ChEBI" id="CHEBI:37565"/>
    </ligand>
</feature>
<feature type="modified residue" description="N,N,N-trimethylglycine" evidence="3">
    <location>
        <position position="2"/>
    </location>
</feature>
<feature type="modified residue" description="N6,N6,N6-trimethyllysine; alternate" evidence="3">
    <location>
        <position position="36"/>
    </location>
</feature>
<feature type="modified residue" description="N6,N6-dimethyllysine; alternate" evidence="3">
    <location>
        <position position="36"/>
    </location>
</feature>
<feature type="modified residue" description="N6-methyllysine; alternate" evidence="3">
    <location>
        <position position="36"/>
    </location>
</feature>
<feature type="modified residue" description="N6,N6-dimethyllysine" evidence="3">
    <location>
        <position position="55"/>
    </location>
</feature>
<feature type="modified residue" description="N6,N6,N6-trimethyllysine; by EEF1AKMT1" evidence="3">
    <location>
        <position position="79"/>
    </location>
</feature>
<feature type="modified residue" description="N6,N6,N6-trimethyllysine; alternate; by EEF1AKMT3" evidence="3">
    <location>
        <position position="165"/>
    </location>
</feature>
<feature type="modified residue" description="N6,N6-dimethyllysine; alternate; by EEF1AKMT3" evidence="3">
    <location>
        <position position="165"/>
    </location>
</feature>
<feature type="modified residue" description="N6-acetyllysine; alternate" evidence="1">
    <location>
        <position position="165"/>
    </location>
</feature>
<feature type="modified residue" description="N6-methyllysine; alternate; by EEF1AKMT3" evidence="3">
    <location>
        <position position="165"/>
    </location>
</feature>
<feature type="modified residue" description="N6-acetyllysine" evidence="1">
    <location>
        <position position="172"/>
    </location>
</feature>
<feature type="modified residue" description="N6-acetyllysine" evidence="1">
    <location>
        <position position="273"/>
    </location>
</feature>
<feature type="modified residue" description="Phosphoserine; by TGFBR1" evidence="3">
    <location>
        <position position="300"/>
    </location>
</feature>
<feature type="modified residue" description="5-glutamyl glycerylphosphorylethanolamine" evidence="3">
    <location>
        <position position="301"/>
    </location>
</feature>
<feature type="modified residue" description="N6,N6,N6-trimethyllysine; by EEF1AKMT2" evidence="3">
    <location>
        <position position="318"/>
    </location>
</feature>
<feature type="modified residue" description="5-glutamyl glycerylphosphorylethanolamine" evidence="3">
    <location>
        <position position="374"/>
    </location>
</feature>
<feature type="modified residue" description="N6-acetyllysine; alternate" evidence="1">
    <location>
        <position position="392"/>
    </location>
</feature>
<feature type="modified residue" description="N6-succinyllysine; alternate" evidence="1">
    <location>
        <position position="392"/>
    </location>
</feature>
<feature type="modified residue" description="Phosphothreonine; by PASK" evidence="3">
    <location>
        <position position="432"/>
    </location>
</feature>
<feature type="modified residue" description="N6-acetyllysine" evidence="1">
    <location>
        <position position="439"/>
    </location>
</feature>
<feature type="cross-link" description="Glycyl lysine isopeptide (Lys-Gly) (interchain with G-Cter in ubiquitin)" evidence="3">
    <location>
        <position position="385"/>
    </location>
</feature>
<feature type="sequence conflict" description="In Ref. 3; AAI05316." evidence="6" ref="3">
    <original>L</original>
    <variation>M</variation>
    <location>
        <position position="232"/>
    </location>
</feature>
<name>EF1A1_BOVIN</name>
<proteinExistence type="evidence at protein level"/>
<comment type="function">
    <text evidence="3 4">Translation elongation factor that catalyzes the GTP-dependent binding of aminoacyl-tRNA (aa-tRNA) to the A-site of ribosomes during the elongation phase of protein synthesis. Base pairing between the mRNA codon and the aa-tRNA anticodon promotes GTP hydrolysis, releasing the aa-tRNA from EEF1A1 and allowing its accommodation into the ribosome. The growing protein chain is subsequently transferred from the P-site peptidyl tRNA to the A-site aa-tRNA, extending it by one amino acid through ribosome-catalyzed peptide bond formation. Also plays a role in the positive regulation of IFNG transcription in T-helper 1 cells as part of an IFNG promoter-binding complex with TXK and PARP1 (By similarity). Also plays a role in cytoskeleton organization by promoting actin bundling (By similarity).</text>
</comment>
<comment type="catalytic activity">
    <reaction evidence="3">
        <text>GTP + H2O = GDP + phosphate + H(+)</text>
        <dbReference type="Rhea" id="RHEA:19669"/>
        <dbReference type="ChEBI" id="CHEBI:15377"/>
        <dbReference type="ChEBI" id="CHEBI:15378"/>
        <dbReference type="ChEBI" id="CHEBI:37565"/>
        <dbReference type="ChEBI" id="CHEBI:43474"/>
        <dbReference type="ChEBI" id="CHEBI:58189"/>
    </reaction>
    <physiologicalReaction direction="left-to-right" evidence="3">
        <dbReference type="Rhea" id="RHEA:19670"/>
    </physiologicalReaction>
</comment>
<comment type="subunit">
    <text evidence="2 3">Found in a nuclear export complex with XPO5, EEF1A1, Ran and aminoacylated tRNA. Interacts with PARP1 and TXK. Interacts with KARS1. May interact with ERGIC2. Interacts with IFIT1 (via TPR repeats 4-7) (By similarity). Interacts with DLC1, facilitating distribution to the membrane periphery and ruffles upon growth factor stimulation. Interacts with ZPR1; the interaction occurs in a epidermal growth factor (EGF)-dependent manner (By similarity). Interacts with PPP1R16B (By similarity). Interacts with SPHK1 and SPHK2; both interactions increase SPHK1 and SPHK2 kinase activity (By similarity). Interacts with guanyl-nucleotide exchange factor EEF1B2 (By similarity). Interacts (via middle-region) with HTATIP2 (via N-terminus); the interaction is direct and competes with EEF1A1 binding to guanyl-nucleotide exchange factor EEF1B2, thereby inhibiting GDP for GTP exchange and reactivation of EEF1A1 (By similarity). Interacts with tRNA (By similarity).</text>
</comment>
<comment type="interaction">
    <interactant intactId="EBI-352178">
        <id>P68103</id>
    </interactant>
    <interactant intactId="EBI-9350549">
        <id>PRO_0000038035</id>
        <dbReference type="UniProtKB" id="P19711"/>
    </interactant>
    <organismsDiffer>true</organismsDiffer>
    <experiments>6</experiments>
</comment>
<comment type="interaction">
    <interactant intactId="EBI-352178">
        <id>P68103</id>
    </interactant>
    <interactant intactId="EBI-9350684">
        <id>PRO_0000038022</id>
        <dbReference type="UniProtKB" id="Q96662"/>
    </interactant>
    <organismsDiffer>true</organismsDiffer>
    <experiments>2</experiments>
</comment>
<comment type="subcellular location">
    <subcellularLocation>
        <location evidence="3">Cytoplasm</location>
    </subcellularLocation>
    <subcellularLocation>
        <location evidence="3">Nucleus</location>
    </subcellularLocation>
    <subcellularLocation>
        <location evidence="3">Nucleus</location>
        <location evidence="3">Nucleolus</location>
    </subcellularLocation>
    <subcellularLocation>
        <location evidence="3">Cell membrane</location>
    </subcellularLocation>
    <text evidence="3">Colocalizes with DLC1 at actin-rich regions in the cell periphery. Translocates together with ZPR1 from the cytoplasm to the nucleus and nucleolus after treatment with mitogens. Localization at the cell membrane depends on EEF1A1 phosphorylation status and the presence of PPP1R16B.</text>
</comment>
<comment type="PTM">
    <text evidence="3">ISGylated.</text>
</comment>
<comment type="PTM">
    <text evidence="3">Phosphorylated by TXK. Phosphorylation by PASK increases translation efficiency. Phosphorylated by ROCK2. Phosphorylation by TGFBR1 inhibits translation elongation.</text>
</comment>
<comment type="PTM">
    <text evidence="3">Trimethylated at Lys-79 by EEF1AKMT1. Methylated at Lys-165 by EEF1AKMT3, methylation by EEF1AKMT3 is dynamic as well as inducible by stress conditions, such as ER-stress, and plays a regulatory role on mRNA translation. Trimethylated at Lys-318 by EEF1AKMT2. Mono-, di-, and trimethylated at Lys-36 by EEF1AKMT4; trimethylated form is predominant. Methylation by EEF1AKMT4 contributes to the fine-tuning of translation rates for a subset of tRNAs. Trimethylated at Gly-2 by METTL13. Mono- and dimethylated at Lys-55 by METTL13; dimethylated form is predominant.</text>
</comment>
<comment type="PTM">
    <text evidence="3">Ubiquitinated at Lys-385 by RNF14 in response to ribosome collisions (ribosome stalling), leading to its degradation by the proteasome and rescue of stalled ribosomes.</text>
</comment>
<comment type="similarity">
    <text evidence="6">Belongs to the TRAFAC class translation factor GTPase superfamily. Classic translation factor GTPase family. EF-Tu/EF-1A subfamily.</text>
</comment>
<dbReference type="EC" id="3.6.5.-" evidence="3"/>
<dbReference type="EMBL" id="AJ238405">
    <property type="protein sequence ID" value="CAB88863.1"/>
    <property type="molecule type" value="mRNA"/>
</dbReference>
<dbReference type="EMBL" id="AB060107">
    <property type="protein sequence ID" value="BAB60846.1"/>
    <property type="molecule type" value="mRNA"/>
</dbReference>
<dbReference type="EMBL" id="BC105315">
    <property type="protein sequence ID" value="AAI05316.1"/>
    <property type="molecule type" value="mRNA"/>
</dbReference>
<dbReference type="EMBL" id="BC142302">
    <property type="protein sequence ID" value="AAI42303.1"/>
    <property type="molecule type" value="mRNA"/>
</dbReference>
<dbReference type="RefSeq" id="NP_776960.1">
    <property type="nucleotide sequence ID" value="NM_174535.2"/>
</dbReference>
<dbReference type="SMR" id="P68103"/>
<dbReference type="BioGRID" id="159494">
    <property type="interactions" value="2"/>
</dbReference>
<dbReference type="FunCoup" id="P68103">
    <property type="interactions" value="2332"/>
</dbReference>
<dbReference type="IntAct" id="P68103">
    <property type="interactions" value="3"/>
</dbReference>
<dbReference type="STRING" id="9913.ENSBTAP00000061151"/>
<dbReference type="PaxDb" id="9913-ENSBTAP00000019318"/>
<dbReference type="PeptideAtlas" id="P68103"/>
<dbReference type="Ensembl" id="ENSBTAT00000087016.1">
    <property type="protein sequence ID" value="ENSBTAP00000061151.1"/>
    <property type="gene ID" value="ENSBTAG00000014534.7"/>
</dbReference>
<dbReference type="GeneID" id="282220"/>
<dbReference type="KEGG" id="bta:282220"/>
<dbReference type="CTD" id="1915"/>
<dbReference type="VEuPathDB" id="HostDB:ENSBTAG00000014534"/>
<dbReference type="VGNC" id="VGNC:56362">
    <property type="gene designation" value="EEF1A1"/>
</dbReference>
<dbReference type="eggNOG" id="KOG0052">
    <property type="taxonomic scope" value="Eukaryota"/>
</dbReference>
<dbReference type="GeneTree" id="ENSGT00950000183029"/>
<dbReference type="HOGENOM" id="CLU_007265_3_5_1"/>
<dbReference type="InParanoid" id="P68103"/>
<dbReference type="OMA" id="FAPQNIT"/>
<dbReference type="OrthoDB" id="9857985at2759"/>
<dbReference type="TreeFam" id="TF300304"/>
<dbReference type="Reactome" id="R-BTA-156842">
    <property type="pathway name" value="Eukaryotic Translation Elongation"/>
</dbReference>
<dbReference type="Reactome" id="R-BTA-3371511">
    <property type="pathway name" value="HSF1 activation"/>
</dbReference>
<dbReference type="Reactome" id="R-BTA-6798695">
    <property type="pathway name" value="Neutrophil degranulation"/>
</dbReference>
<dbReference type="Reactome" id="R-BTA-8876725">
    <property type="pathway name" value="Protein methylation"/>
</dbReference>
<dbReference type="CD-CODE" id="D7FE2080">
    <property type="entry name" value="Nucleolus"/>
</dbReference>
<dbReference type="Proteomes" id="UP000009136">
    <property type="component" value="Chromosome 9"/>
</dbReference>
<dbReference type="Bgee" id="ENSBTAG00000014534">
    <property type="expression patterns" value="Expressed in myometrium and 105 other cell types or tissues"/>
</dbReference>
<dbReference type="GO" id="GO:0005737">
    <property type="term" value="C:cytoplasm"/>
    <property type="evidence" value="ECO:0000250"/>
    <property type="project" value="UniProtKB"/>
</dbReference>
<dbReference type="GO" id="GO:0005730">
    <property type="term" value="C:nucleolus"/>
    <property type="evidence" value="ECO:0000250"/>
    <property type="project" value="UniProtKB"/>
</dbReference>
<dbReference type="GO" id="GO:0005634">
    <property type="term" value="C:nucleus"/>
    <property type="evidence" value="ECO:0000250"/>
    <property type="project" value="UniProtKB"/>
</dbReference>
<dbReference type="GO" id="GO:0005886">
    <property type="term" value="C:plasma membrane"/>
    <property type="evidence" value="ECO:0000250"/>
    <property type="project" value="UniProtKB"/>
</dbReference>
<dbReference type="GO" id="GO:0005525">
    <property type="term" value="F:GTP binding"/>
    <property type="evidence" value="ECO:0007669"/>
    <property type="project" value="UniProtKB-KW"/>
</dbReference>
<dbReference type="GO" id="GO:0003924">
    <property type="term" value="F:GTPase activity"/>
    <property type="evidence" value="ECO:0000250"/>
    <property type="project" value="UniProtKB"/>
</dbReference>
<dbReference type="GO" id="GO:0019209">
    <property type="term" value="F:kinase activator activity"/>
    <property type="evidence" value="ECO:0000250"/>
    <property type="project" value="UniProtKB"/>
</dbReference>
<dbReference type="GO" id="GO:0003746">
    <property type="term" value="F:translation elongation factor activity"/>
    <property type="evidence" value="ECO:0000250"/>
    <property type="project" value="UniProtKB"/>
</dbReference>
<dbReference type="GO" id="GO:0071364">
    <property type="term" value="P:cellular response to epidermal growth factor stimulus"/>
    <property type="evidence" value="ECO:0000250"/>
    <property type="project" value="UniProtKB"/>
</dbReference>
<dbReference type="GO" id="GO:0006412">
    <property type="term" value="P:translation"/>
    <property type="evidence" value="ECO:0000318"/>
    <property type="project" value="GO_Central"/>
</dbReference>
<dbReference type="GO" id="GO:0006414">
    <property type="term" value="P:translational elongation"/>
    <property type="evidence" value="ECO:0000250"/>
    <property type="project" value="UniProtKB"/>
</dbReference>
<dbReference type="CDD" id="cd01883">
    <property type="entry name" value="EF1_alpha"/>
    <property type="match status" value="1"/>
</dbReference>
<dbReference type="CDD" id="cd03693">
    <property type="entry name" value="EF1_alpha_II"/>
    <property type="match status" value="1"/>
</dbReference>
<dbReference type="CDD" id="cd03705">
    <property type="entry name" value="EF1_alpha_III"/>
    <property type="match status" value="1"/>
</dbReference>
<dbReference type="FunFam" id="2.40.30.10:FF:000005">
    <property type="entry name" value="Elongation factor 1-alpha"/>
    <property type="match status" value="1"/>
</dbReference>
<dbReference type="FunFam" id="3.40.50.300:FF:000090">
    <property type="entry name" value="Elongation factor 1-alpha"/>
    <property type="match status" value="1"/>
</dbReference>
<dbReference type="FunFam" id="2.40.30.10:FF:000168">
    <property type="entry name" value="Elongation factor 1-alpha 2"/>
    <property type="match status" value="1"/>
</dbReference>
<dbReference type="Gene3D" id="3.40.50.300">
    <property type="entry name" value="P-loop containing nucleotide triphosphate hydrolases"/>
    <property type="match status" value="1"/>
</dbReference>
<dbReference type="Gene3D" id="2.40.30.10">
    <property type="entry name" value="Translation factors"/>
    <property type="match status" value="2"/>
</dbReference>
<dbReference type="HAMAP" id="MF_00118_A">
    <property type="entry name" value="EF_Tu_A"/>
    <property type="match status" value="1"/>
</dbReference>
<dbReference type="InterPro" id="IPR004161">
    <property type="entry name" value="EFTu-like_2"/>
</dbReference>
<dbReference type="InterPro" id="IPR031157">
    <property type="entry name" value="G_TR_CS"/>
</dbReference>
<dbReference type="InterPro" id="IPR054696">
    <property type="entry name" value="GTP-eEF1A_C"/>
</dbReference>
<dbReference type="InterPro" id="IPR027417">
    <property type="entry name" value="P-loop_NTPase"/>
</dbReference>
<dbReference type="InterPro" id="IPR000795">
    <property type="entry name" value="T_Tr_GTP-bd_dom"/>
</dbReference>
<dbReference type="InterPro" id="IPR050100">
    <property type="entry name" value="TRAFAC_GTPase_members"/>
</dbReference>
<dbReference type="InterPro" id="IPR009000">
    <property type="entry name" value="Transl_B-barrel_sf"/>
</dbReference>
<dbReference type="InterPro" id="IPR009001">
    <property type="entry name" value="Transl_elong_EF1A/Init_IF2_C"/>
</dbReference>
<dbReference type="InterPro" id="IPR004539">
    <property type="entry name" value="Transl_elong_EF1A_euk/arc"/>
</dbReference>
<dbReference type="NCBIfam" id="TIGR00483">
    <property type="entry name" value="EF-1_alpha"/>
    <property type="match status" value="1"/>
</dbReference>
<dbReference type="NCBIfam" id="NF008969">
    <property type="entry name" value="PRK12317.1"/>
    <property type="match status" value="1"/>
</dbReference>
<dbReference type="PANTHER" id="PTHR23115">
    <property type="entry name" value="TRANSLATION FACTOR"/>
    <property type="match status" value="1"/>
</dbReference>
<dbReference type="Pfam" id="PF22594">
    <property type="entry name" value="GTP-eEF1A_C"/>
    <property type="match status" value="1"/>
</dbReference>
<dbReference type="Pfam" id="PF00009">
    <property type="entry name" value="GTP_EFTU"/>
    <property type="match status" value="1"/>
</dbReference>
<dbReference type="Pfam" id="PF03144">
    <property type="entry name" value="GTP_EFTU_D2"/>
    <property type="match status" value="1"/>
</dbReference>
<dbReference type="PRINTS" id="PR00315">
    <property type="entry name" value="ELONGATNFCT"/>
</dbReference>
<dbReference type="SUPFAM" id="SSF50465">
    <property type="entry name" value="EF-Tu/eEF-1alpha/eIF2-gamma C-terminal domain"/>
    <property type="match status" value="1"/>
</dbReference>
<dbReference type="SUPFAM" id="SSF52540">
    <property type="entry name" value="P-loop containing nucleoside triphosphate hydrolases"/>
    <property type="match status" value="1"/>
</dbReference>
<dbReference type="SUPFAM" id="SSF50447">
    <property type="entry name" value="Translation proteins"/>
    <property type="match status" value="1"/>
</dbReference>
<dbReference type="PROSITE" id="PS00301">
    <property type="entry name" value="G_TR_1"/>
    <property type="match status" value="1"/>
</dbReference>
<dbReference type="PROSITE" id="PS51722">
    <property type="entry name" value="G_TR_2"/>
    <property type="match status" value="1"/>
</dbReference>
<reference key="1">
    <citation type="submission" date="1999-04" db="EMBL/GenBank/DDBJ databases">
        <title>BVDV NS5A interacts with eEF1a.</title>
        <authorList>
            <person name="Perez D.R."/>
            <person name="Johnson C.M."/>
            <person name="Donis R.O."/>
        </authorList>
    </citation>
    <scope>NUCLEOTIDE SEQUENCE [MRNA]</scope>
</reference>
<reference key="2">
    <citation type="submission" date="2001-04" db="EMBL/GenBank/DDBJ databases">
        <title>cDNA of bovine elongation factor 1 alpha from endometrium.</title>
        <authorList>
            <person name="Kojima T."/>
            <person name="Oshima K."/>
            <person name="Watanabe H."/>
            <person name="Komatsu M."/>
        </authorList>
    </citation>
    <scope>NUCLEOTIDE SEQUENCE [MRNA]</scope>
    <source>
        <strain>Japanese black</strain>
        <tissue>Endometrium</tissue>
    </source>
</reference>
<reference key="3">
    <citation type="submission" date="2007-06" db="EMBL/GenBank/DDBJ databases">
        <authorList>
            <consortium name="NIH - Mammalian Gene Collection (MGC) project"/>
        </authorList>
    </citation>
    <scope>NUCLEOTIDE SEQUENCE [LARGE SCALE MRNA]</scope>
    <source>
        <strain>Crossbred X Angus</strain>
        <strain>Hereford</strain>
        <tissue>Ileum</tissue>
        <tissue>Thymus</tissue>
    </source>
</reference>
<organism>
    <name type="scientific">Bos taurus</name>
    <name type="common">Bovine</name>
    <dbReference type="NCBI Taxonomy" id="9913"/>
    <lineage>
        <taxon>Eukaryota</taxon>
        <taxon>Metazoa</taxon>
        <taxon>Chordata</taxon>
        <taxon>Craniata</taxon>
        <taxon>Vertebrata</taxon>
        <taxon>Euteleostomi</taxon>
        <taxon>Mammalia</taxon>
        <taxon>Eutheria</taxon>
        <taxon>Laurasiatheria</taxon>
        <taxon>Artiodactyla</taxon>
        <taxon>Ruminantia</taxon>
        <taxon>Pecora</taxon>
        <taxon>Bovidae</taxon>
        <taxon>Bovinae</taxon>
        <taxon>Bos</taxon>
    </lineage>
</organism>
<evidence type="ECO:0000250" key="1">
    <source>
        <dbReference type="UniProtKB" id="P10126"/>
    </source>
</evidence>
<evidence type="ECO:0000250" key="2">
    <source>
        <dbReference type="UniProtKB" id="P62630"/>
    </source>
</evidence>
<evidence type="ECO:0000250" key="3">
    <source>
        <dbReference type="UniProtKB" id="P68104"/>
    </source>
</evidence>
<evidence type="ECO:0000250" key="4">
    <source>
        <dbReference type="UniProtKB" id="P68105"/>
    </source>
</evidence>
<evidence type="ECO:0000255" key="5"/>
<evidence type="ECO:0000305" key="6"/>
<keyword id="KW-0007">Acetylation</keyword>
<keyword id="KW-1003">Cell membrane</keyword>
<keyword id="KW-0963">Cytoplasm</keyword>
<keyword id="KW-0251">Elongation factor</keyword>
<keyword id="KW-0342">GTP-binding</keyword>
<keyword id="KW-0378">Hydrolase</keyword>
<keyword id="KW-1017">Isopeptide bond</keyword>
<keyword id="KW-0472">Membrane</keyword>
<keyword id="KW-0488">Methylation</keyword>
<keyword id="KW-0547">Nucleotide-binding</keyword>
<keyword id="KW-0539">Nucleus</keyword>
<keyword id="KW-0597">Phosphoprotein</keyword>
<keyword id="KW-0648">Protein biosynthesis</keyword>
<keyword id="KW-1185">Reference proteome</keyword>
<keyword id="KW-0832">Ubl conjugation</keyword>
<sequence>MGKEKTHINIVVIGHVDSGKSTTTGHLIYKCGGIDKRTIEKFEKEAAEMGKGSFKYAWVLDKLKAERERGITIDISLWKFETSKYYVTIIDAPGHRDFIKNMITGTSQADCAVLIVAAGVGEFEAGISKNGQTREHALLAYTLGVKQLIVGVNKMDSTEPPYSQKRYEEIVKEVSTYIKKIGYNPDTVAFVPISGWNGDNMLEPSANMPWFKGWKVTRKDGNASGTTLLEALDCILPPTRPTDKPLRLPLQDVYKIGGIGTVPVGRVETGVLKPGMVVTFAPVNVTTEVKSVEMHHEALSEALPGDNVGFNVKNVSVKDVRRGNVAGDSKNDPPMEAAGFTAQVIILNHPGQISAGYAPVLDCHTAHIACKFAELKEKIDRRSGKKLEDGPKFLKSGDAAIVDMVPGKPMCVESFSDYPPLGRFAVRDMRQTVAVGVIKAVDKKAAGAGKVTKSAQKAQKAK</sequence>
<protein>
    <recommendedName>
        <fullName>Elongation factor 1-alpha 1</fullName>
        <shortName>EF-1-alpha-1</shortName>
        <ecNumber evidence="3">3.6.5.-</ecNumber>
    </recommendedName>
    <alternativeName>
        <fullName>Elongation factor Tu</fullName>
        <shortName>EF-Tu</shortName>
    </alternativeName>
    <alternativeName>
        <fullName>Eukaryotic elongation factor 1 A-1</fullName>
        <shortName>eEF1A-1</shortName>
    </alternativeName>
</protein>
<accession>P68103</accession>
<accession>A5PK01</accession>
<accession>P04719</accession>
<accession>P04720</accession>
<accession>Q2KJJ3</accession>